<keyword id="KW-0025">Alternative splicing</keyword>
<keyword id="KW-1003">Cell membrane</keyword>
<keyword id="KW-0966">Cell projection</keyword>
<keyword id="KW-0963">Cytoplasm</keyword>
<keyword id="KW-0472">Membrane</keyword>
<keyword id="KW-0493">Microtubule</keyword>
<keyword id="KW-0524">Neurogenesis</keyword>
<keyword id="KW-0539">Nucleus</keyword>
<keyword id="KW-0597">Phosphoprotein</keyword>
<keyword id="KW-1185">Reference proteome</keyword>
<feature type="chain" id="PRO_0000419208" description="Fibroblast growth factor 13">
    <location>
        <begin position="1"/>
        <end position="245"/>
    </location>
</feature>
<feature type="region of interest" description="Mediates targeting to the nucleus" evidence="1">
    <location>
        <begin position="1"/>
        <end position="62"/>
    </location>
</feature>
<feature type="region of interest" description="Disordered" evidence="5">
    <location>
        <begin position="1"/>
        <end position="36"/>
    </location>
</feature>
<feature type="region of interest" description="Mediates interaction with sodium channels" evidence="1">
    <location>
        <begin position="67"/>
        <end position="201"/>
    </location>
</feature>
<feature type="region of interest" description="Disordered" evidence="5">
    <location>
        <begin position="213"/>
        <end position="245"/>
    </location>
</feature>
<feature type="compositionally biased region" description="Polar residues" evidence="5">
    <location>
        <begin position="215"/>
        <end position="245"/>
    </location>
</feature>
<feature type="modified residue" description="Phosphoserine" evidence="4">
    <location>
        <position position="208"/>
    </location>
</feature>
<feature type="splice variant" id="VSP_044133" description="In isoform 2." evidence="7">
    <original>MAAAIASSLIRQKRQAREREKSNACKCVSSPSKGKTSCDKNKLNVFSRVKLFGSKKRRRRRP</original>
    <variation>MALLRKSYS</variation>
    <location>
        <begin position="1"/>
        <end position="62"/>
    </location>
</feature>
<reference key="1">
    <citation type="submission" date="2000-05" db="EMBL/GenBank/DDBJ databases">
        <title>Rattus norvegicus fibroblast growth factor 13.</title>
        <authorList>
            <person name="Xiao H."/>
            <person name="Huang Q."/>
            <person name="Zhang F."/>
            <person name="Guo C."/>
            <person name="Chen Z."/>
            <person name="Han Z."/>
            <person name="Zhang X."/>
        </authorList>
    </citation>
    <scope>NUCLEOTIDE SEQUENCE [MRNA] (ISOFORM 2)</scope>
    <source>
        <tissue>Spinal ganglion</tissue>
    </source>
</reference>
<reference key="2">
    <citation type="journal article" date="2004" name="Nature">
        <title>Genome sequence of the Brown Norway rat yields insights into mammalian evolution.</title>
        <authorList>
            <person name="Gibbs R.A."/>
            <person name="Weinstock G.M."/>
            <person name="Metzker M.L."/>
            <person name="Muzny D.M."/>
            <person name="Sodergren E.J."/>
            <person name="Scherer S."/>
            <person name="Scott G."/>
            <person name="Steffen D."/>
            <person name="Worley K.C."/>
            <person name="Burch P.E."/>
            <person name="Okwuonu G."/>
            <person name="Hines S."/>
            <person name="Lewis L."/>
            <person name="Deramo C."/>
            <person name="Delgado O."/>
            <person name="Dugan-Rocha S."/>
            <person name="Miner G."/>
            <person name="Morgan M."/>
            <person name="Hawes A."/>
            <person name="Gill R."/>
            <person name="Holt R.A."/>
            <person name="Adams M.D."/>
            <person name="Amanatides P.G."/>
            <person name="Baden-Tillson H."/>
            <person name="Barnstead M."/>
            <person name="Chin S."/>
            <person name="Evans C.A."/>
            <person name="Ferriera S."/>
            <person name="Fosler C."/>
            <person name="Glodek A."/>
            <person name="Gu Z."/>
            <person name="Jennings D."/>
            <person name="Kraft C.L."/>
            <person name="Nguyen T."/>
            <person name="Pfannkoch C.M."/>
            <person name="Sitter C."/>
            <person name="Sutton G.G."/>
            <person name="Venter J.C."/>
            <person name="Woodage T."/>
            <person name="Smith D."/>
            <person name="Lee H.-M."/>
            <person name="Gustafson E."/>
            <person name="Cahill P."/>
            <person name="Kana A."/>
            <person name="Doucette-Stamm L."/>
            <person name="Weinstock K."/>
            <person name="Fechtel K."/>
            <person name="Weiss R.B."/>
            <person name="Dunn D.M."/>
            <person name="Green E.D."/>
            <person name="Blakesley R.W."/>
            <person name="Bouffard G.G."/>
            <person name="De Jong P.J."/>
            <person name="Osoegawa K."/>
            <person name="Zhu B."/>
            <person name="Marra M."/>
            <person name="Schein J."/>
            <person name="Bosdet I."/>
            <person name="Fjell C."/>
            <person name="Jones S."/>
            <person name="Krzywinski M."/>
            <person name="Mathewson C."/>
            <person name="Siddiqui A."/>
            <person name="Wye N."/>
            <person name="McPherson J."/>
            <person name="Zhao S."/>
            <person name="Fraser C.M."/>
            <person name="Shetty J."/>
            <person name="Shatsman S."/>
            <person name="Geer K."/>
            <person name="Chen Y."/>
            <person name="Abramzon S."/>
            <person name="Nierman W.C."/>
            <person name="Havlak P.H."/>
            <person name="Chen R."/>
            <person name="Durbin K.J."/>
            <person name="Egan A."/>
            <person name="Ren Y."/>
            <person name="Song X.-Z."/>
            <person name="Li B."/>
            <person name="Liu Y."/>
            <person name="Qin X."/>
            <person name="Cawley S."/>
            <person name="Cooney A.J."/>
            <person name="D'Souza L.M."/>
            <person name="Martin K."/>
            <person name="Wu J.Q."/>
            <person name="Gonzalez-Garay M.L."/>
            <person name="Jackson A.R."/>
            <person name="Kalafus K.J."/>
            <person name="McLeod M.P."/>
            <person name="Milosavljevic A."/>
            <person name="Virk D."/>
            <person name="Volkov A."/>
            <person name="Wheeler D.A."/>
            <person name="Zhang Z."/>
            <person name="Bailey J.A."/>
            <person name="Eichler E.E."/>
            <person name="Tuzun E."/>
            <person name="Birney E."/>
            <person name="Mongin E."/>
            <person name="Ureta-Vidal A."/>
            <person name="Woodwark C."/>
            <person name="Zdobnov E."/>
            <person name="Bork P."/>
            <person name="Suyama M."/>
            <person name="Torrents D."/>
            <person name="Alexandersson M."/>
            <person name="Trask B.J."/>
            <person name="Young J.M."/>
            <person name="Huang H."/>
            <person name="Wang H."/>
            <person name="Xing H."/>
            <person name="Daniels S."/>
            <person name="Gietzen D."/>
            <person name="Schmidt J."/>
            <person name="Stevens K."/>
            <person name="Vitt U."/>
            <person name="Wingrove J."/>
            <person name="Camara F."/>
            <person name="Mar Alba M."/>
            <person name="Abril J.F."/>
            <person name="Guigo R."/>
            <person name="Smit A."/>
            <person name="Dubchak I."/>
            <person name="Rubin E.M."/>
            <person name="Couronne O."/>
            <person name="Poliakov A."/>
            <person name="Huebner N."/>
            <person name="Ganten D."/>
            <person name="Goesele C."/>
            <person name="Hummel O."/>
            <person name="Kreitler T."/>
            <person name="Lee Y.-A."/>
            <person name="Monti J."/>
            <person name="Schulz H."/>
            <person name="Zimdahl H."/>
            <person name="Himmelbauer H."/>
            <person name="Lehrach H."/>
            <person name="Jacob H.J."/>
            <person name="Bromberg S."/>
            <person name="Gullings-Handley J."/>
            <person name="Jensen-Seaman M.I."/>
            <person name="Kwitek A.E."/>
            <person name="Lazar J."/>
            <person name="Pasko D."/>
            <person name="Tonellato P.J."/>
            <person name="Twigger S."/>
            <person name="Ponting C.P."/>
            <person name="Duarte J.M."/>
            <person name="Rice S."/>
            <person name="Goodstadt L."/>
            <person name="Beatson S.A."/>
            <person name="Emes R.D."/>
            <person name="Winter E.E."/>
            <person name="Webber C."/>
            <person name="Brandt P."/>
            <person name="Nyakatura G."/>
            <person name="Adetobi M."/>
            <person name="Chiaromonte F."/>
            <person name="Elnitski L."/>
            <person name="Eswara P."/>
            <person name="Hardison R.C."/>
            <person name="Hou M."/>
            <person name="Kolbe D."/>
            <person name="Makova K."/>
            <person name="Miller W."/>
            <person name="Nekrutenko A."/>
            <person name="Riemer C."/>
            <person name="Schwartz S."/>
            <person name="Taylor J."/>
            <person name="Yang S."/>
            <person name="Zhang Y."/>
            <person name="Lindpaintner K."/>
            <person name="Andrews T.D."/>
            <person name="Caccamo M."/>
            <person name="Clamp M."/>
            <person name="Clarke L."/>
            <person name="Curwen V."/>
            <person name="Durbin R.M."/>
            <person name="Eyras E."/>
            <person name="Searle S.M."/>
            <person name="Cooper G.M."/>
            <person name="Batzoglou S."/>
            <person name="Brudno M."/>
            <person name="Sidow A."/>
            <person name="Stone E.A."/>
            <person name="Payseur B.A."/>
            <person name="Bourque G."/>
            <person name="Lopez-Otin C."/>
            <person name="Puente X.S."/>
            <person name="Chakrabarti K."/>
            <person name="Chatterji S."/>
            <person name="Dewey C."/>
            <person name="Pachter L."/>
            <person name="Bray N."/>
            <person name="Yap V.B."/>
            <person name="Caspi A."/>
            <person name="Tesler G."/>
            <person name="Pevzner P.A."/>
            <person name="Haussler D."/>
            <person name="Roskin K.M."/>
            <person name="Baertsch R."/>
            <person name="Clawson H."/>
            <person name="Furey T.S."/>
            <person name="Hinrichs A.S."/>
            <person name="Karolchik D."/>
            <person name="Kent W.J."/>
            <person name="Rosenbloom K.R."/>
            <person name="Trumbower H."/>
            <person name="Weirauch M."/>
            <person name="Cooper D.N."/>
            <person name="Stenson P.D."/>
            <person name="Ma B."/>
            <person name="Brent M."/>
            <person name="Arumugam M."/>
            <person name="Shteynberg D."/>
            <person name="Copley R.R."/>
            <person name="Taylor M.S."/>
            <person name="Riethman H."/>
            <person name="Mudunuri U."/>
            <person name="Peterson J."/>
            <person name="Guyer M."/>
            <person name="Felsenfeld A."/>
            <person name="Old S."/>
            <person name="Mockrin S."/>
            <person name="Collins F.S."/>
        </authorList>
    </citation>
    <scope>NUCLEOTIDE SEQUENCE [LARGE SCALE GENOMIC DNA]</scope>
    <source>
        <strain>Brown Norway</strain>
    </source>
</reference>
<reference key="3">
    <citation type="submission" date="2005-07" db="EMBL/GenBank/DDBJ databases">
        <authorList>
            <person name="Mural R.J."/>
            <person name="Adams M.D."/>
            <person name="Myers E.W."/>
            <person name="Smith H.O."/>
            <person name="Venter J.C."/>
        </authorList>
    </citation>
    <scope>NUCLEOTIDE SEQUENCE [LARGE SCALE GENOMIC DNA]</scope>
    <source>
        <strain>Brown Norway</strain>
    </source>
</reference>
<reference key="4">
    <citation type="journal article" date="2002" name="J. Biol. Chem.">
        <title>Fibroblast growth factor homologous factors and the islet brain-2 scaffold protein regulate activation of a stress-activated protein kinase.</title>
        <authorList>
            <person name="Schoorlemmer J."/>
            <person name="Goldfarb M."/>
        </authorList>
    </citation>
    <scope>PHOSPHORYLATION</scope>
</reference>
<evidence type="ECO:0000250" key="1"/>
<evidence type="ECO:0000250" key="2">
    <source>
        <dbReference type="UniProtKB" id="P61329"/>
    </source>
</evidence>
<evidence type="ECO:0000250" key="3">
    <source>
        <dbReference type="UniProtKB" id="P70377"/>
    </source>
</evidence>
<evidence type="ECO:0000250" key="4">
    <source>
        <dbReference type="UniProtKB" id="Q92913"/>
    </source>
</evidence>
<evidence type="ECO:0000256" key="5">
    <source>
        <dbReference type="SAM" id="MobiDB-lite"/>
    </source>
</evidence>
<evidence type="ECO:0000269" key="6">
    <source>
    </source>
</evidence>
<evidence type="ECO:0000303" key="7">
    <source ref="1"/>
</evidence>
<evidence type="ECO:0000305" key="8"/>
<protein>
    <recommendedName>
        <fullName>Fibroblast growth factor 13</fullName>
        <shortName>FGF-13</shortName>
    </recommendedName>
</protein>
<gene>
    <name type="primary">Fgf13</name>
</gene>
<comment type="function">
    <text evidence="3 4">Microtubule-binding protein which directly binds tubulin and is involved in both polymerization and stabilization of microtubules (By similarity). Through its action on microtubules, may participate in the refinement of axons by negatively regulating axonal and leading processes branching (By similarity). Plays a crucial role in neuron polarization and migration in the cerebral cortex and the hippocampus (By similarity). Regulates voltage-gated sodium channel transport and function (By similarity). May also play a role in MAPK signaling (By similarity). Required for the development of axonal initial segment-targeting inhibitory GABAergic synapses made by chandelier neurons (By similarity).</text>
</comment>
<comment type="subunit">
    <text evidence="4">Interacts with SCN8A; regulates SCN8A activity. Interacts with SCN1A; may regulate SCN1A activity. Interacts with SCN5A; the interaction is direct and may regulate SNC5A density at membranes and function. May also interact with SCN2A and SCN11A. Interacts with MAPK8IP2; may regulate the MAPK8IP2 scaffolding activity.</text>
</comment>
<comment type="subcellular location">
    <subcellularLocation>
        <location evidence="3">Cell projection</location>
        <location evidence="3">Filopodium</location>
    </subcellularLocation>
    <subcellularLocation>
        <location evidence="3">Cell projection</location>
        <location evidence="3">Growth cone</location>
    </subcellularLocation>
    <subcellularLocation>
        <location evidence="3">Cell projection</location>
        <location evidence="3">Dendrite</location>
    </subcellularLocation>
    <subcellularLocation>
        <location evidence="3">Cell membrane</location>
        <location evidence="3">Sarcolemma</location>
    </subcellularLocation>
    <subcellularLocation>
        <location evidence="3">Cytoplasm</location>
    </subcellularLocation>
    <subcellularLocation>
        <location evidence="2">Nucleus</location>
    </subcellularLocation>
    <text evidence="3">Not secreted. Localizes to the lateral membrane and intercalated disks of myocytes.</text>
</comment>
<comment type="alternative products">
    <event type="alternative splicing"/>
    <isoform>
        <id>Q9ERW3-1</id>
        <name>1</name>
        <sequence type="displayed"/>
    </isoform>
    <isoform>
        <id>Q9ERW3-2</id>
        <name>2</name>
        <sequence type="described" ref="VSP_044133"/>
    </isoform>
</comment>
<comment type="PTM">
    <text evidence="6">May be phosphorylated.</text>
</comment>
<comment type="similarity">
    <text evidence="8">Belongs to the heparin-binding growth factors family.</text>
</comment>
<sequence>MAAAIASSLIRQKRQAREREKSNACKCVSSPSKGKTSCDKNKLNVFSRVKLFGSKKRRRRRPEPQLKGIVTKLYSRQGYHLQLQADGTIDGTKDEDSTYTLFNLIPVGLRVVAIQGVQTKLYLAMNSEGYLYTSEHFTPECKFKESVFENYYVTYSSMIYRQQQSGRGWYLGLNKEGEIMKGNHVKKNKPAAHFLPKPLKVAMYKEPSLHDLTEFSRSGSGTPTKSRSVSGVLNGGKSMSHNEST</sequence>
<name>FGF13_RAT</name>
<accession>Q9ERW3</accession>
<proteinExistence type="evidence at protein level"/>
<dbReference type="EMBL" id="AF271786">
    <property type="protein sequence ID" value="AAG15492.1"/>
    <property type="molecule type" value="mRNA"/>
</dbReference>
<dbReference type="EMBL" id="AABR06108696">
    <property type="status" value="NOT_ANNOTATED_CDS"/>
    <property type="molecule type" value="Genomic_DNA"/>
</dbReference>
<dbReference type="EMBL" id="AABR06108697">
    <property type="status" value="NOT_ANNOTATED_CDS"/>
    <property type="molecule type" value="Genomic_DNA"/>
</dbReference>
<dbReference type="EMBL" id="AABR06108698">
    <property type="status" value="NOT_ANNOTATED_CDS"/>
    <property type="molecule type" value="Genomic_DNA"/>
</dbReference>
<dbReference type="EMBL" id="AABR06108699">
    <property type="status" value="NOT_ANNOTATED_CDS"/>
    <property type="molecule type" value="Genomic_DNA"/>
</dbReference>
<dbReference type="EMBL" id="AABR06108700">
    <property type="status" value="NOT_ANNOTATED_CDS"/>
    <property type="molecule type" value="Genomic_DNA"/>
</dbReference>
<dbReference type="EMBL" id="CH474019">
    <property type="protein sequence ID" value="EDL86166.1"/>
    <property type="molecule type" value="Genomic_DNA"/>
</dbReference>
<dbReference type="EMBL" id="CH474019">
    <property type="protein sequence ID" value="EDL86169.1"/>
    <property type="molecule type" value="Genomic_DNA"/>
</dbReference>
<dbReference type="RefSeq" id="NP_001418577.1">
    <molecule id="Q9ERW3-1"/>
    <property type="nucleotide sequence ID" value="NM_001431648.1"/>
</dbReference>
<dbReference type="RefSeq" id="NP_445880.1">
    <molecule id="Q9ERW3-2"/>
    <property type="nucleotide sequence ID" value="NM_053428.3"/>
</dbReference>
<dbReference type="RefSeq" id="XP_006257654.1">
    <property type="nucleotide sequence ID" value="XM_006257592.1"/>
</dbReference>
<dbReference type="SMR" id="Q9ERW3"/>
<dbReference type="FunCoup" id="Q9ERW3">
    <property type="interactions" value="1175"/>
</dbReference>
<dbReference type="STRING" id="10116.ENSRNOP00000072195"/>
<dbReference type="iPTMnet" id="Q9ERW3"/>
<dbReference type="PhosphoSitePlus" id="Q9ERW3"/>
<dbReference type="PaxDb" id="10116-ENSRNOP00000062217"/>
<dbReference type="ABCD" id="Q9ERW3">
    <property type="antibodies" value="4 sequenced antibodies"/>
</dbReference>
<dbReference type="Ensembl" id="ENSRNOT00000064780.4">
    <molecule id="Q9ERW3-2"/>
    <property type="protein sequence ID" value="ENSRNOP00000062217.2"/>
    <property type="gene ID" value="ENSRNOG00000042753.4"/>
</dbReference>
<dbReference type="Ensembl" id="ENSRNOT00000077402.2">
    <molecule id="Q9ERW3-1"/>
    <property type="protein sequence ID" value="ENSRNOP00000072195.1"/>
    <property type="gene ID" value="ENSRNOG00000042753.4"/>
</dbReference>
<dbReference type="GeneID" id="84488"/>
<dbReference type="KEGG" id="rno:84488"/>
<dbReference type="AGR" id="RGD:620164"/>
<dbReference type="CTD" id="2258"/>
<dbReference type="RGD" id="620164">
    <property type="gene designation" value="Fgf13"/>
</dbReference>
<dbReference type="eggNOG" id="KOG3885">
    <property type="taxonomic scope" value="Eukaryota"/>
</dbReference>
<dbReference type="GeneTree" id="ENSGT00940000163347"/>
<dbReference type="HOGENOM" id="CLU_081609_2_0_1"/>
<dbReference type="InParanoid" id="Q9ERW3"/>
<dbReference type="OMA" id="MECKFKE"/>
<dbReference type="OrthoDB" id="6158176at2759"/>
<dbReference type="PRO" id="PR:Q9ERW3"/>
<dbReference type="Proteomes" id="UP000002494">
    <property type="component" value="Chromosome X"/>
</dbReference>
<dbReference type="Proteomes" id="UP000234681">
    <property type="component" value="Chromosome x"/>
</dbReference>
<dbReference type="Bgee" id="ENSRNOG00000042753">
    <property type="expression patterns" value="Expressed in Ammon's horn and 16 other cell types or tissues"/>
</dbReference>
<dbReference type="ExpressionAtlas" id="Q9ERW3">
    <property type="expression patterns" value="baseline and differential"/>
</dbReference>
<dbReference type="GO" id="GO:0030424">
    <property type="term" value="C:axon"/>
    <property type="evidence" value="ECO:0000250"/>
    <property type="project" value="UniProtKB"/>
</dbReference>
<dbReference type="GO" id="GO:0005737">
    <property type="term" value="C:cytoplasm"/>
    <property type="evidence" value="ECO:0000250"/>
    <property type="project" value="UniProtKB"/>
</dbReference>
<dbReference type="GO" id="GO:0005829">
    <property type="term" value="C:cytosol"/>
    <property type="evidence" value="ECO:0000266"/>
    <property type="project" value="RGD"/>
</dbReference>
<dbReference type="GO" id="GO:0030425">
    <property type="term" value="C:dendrite"/>
    <property type="evidence" value="ECO:0000250"/>
    <property type="project" value="UniProtKB"/>
</dbReference>
<dbReference type="GO" id="GO:0030175">
    <property type="term" value="C:filopodium"/>
    <property type="evidence" value="ECO:0000250"/>
    <property type="project" value="UniProtKB"/>
</dbReference>
<dbReference type="GO" id="GO:0030426">
    <property type="term" value="C:growth cone"/>
    <property type="evidence" value="ECO:0000250"/>
    <property type="project" value="UniProtKB"/>
</dbReference>
<dbReference type="GO" id="GO:0014704">
    <property type="term" value="C:intercalated disc"/>
    <property type="evidence" value="ECO:0000250"/>
    <property type="project" value="UniProtKB"/>
</dbReference>
<dbReference type="GO" id="GO:0016328">
    <property type="term" value="C:lateral plasma membrane"/>
    <property type="evidence" value="ECO:0000266"/>
    <property type="project" value="RGD"/>
</dbReference>
<dbReference type="GO" id="GO:0005874">
    <property type="term" value="C:microtubule"/>
    <property type="evidence" value="ECO:0000250"/>
    <property type="project" value="UniProtKB"/>
</dbReference>
<dbReference type="GO" id="GO:0043005">
    <property type="term" value="C:neuron projection"/>
    <property type="evidence" value="ECO:0000250"/>
    <property type="project" value="UniProtKB"/>
</dbReference>
<dbReference type="GO" id="GO:0005634">
    <property type="term" value="C:nucleus"/>
    <property type="evidence" value="ECO:0000250"/>
    <property type="project" value="UniProtKB"/>
</dbReference>
<dbReference type="GO" id="GO:0005886">
    <property type="term" value="C:plasma membrane"/>
    <property type="evidence" value="ECO:0000250"/>
    <property type="project" value="UniProtKB"/>
</dbReference>
<dbReference type="GO" id="GO:0042383">
    <property type="term" value="C:sarcolemma"/>
    <property type="evidence" value="ECO:0007669"/>
    <property type="project" value="UniProtKB-SubCell"/>
</dbReference>
<dbReference type="GO" id="GO:0048487">
    <property type="term" value="F:beta-tubulin binding"/>
    <property type="evidence" value="ECO:0000250"/>
    <property type="project" value="UniProtKB"/>
</dbReference>
<dbReference type="GO" id="GO:0008083">
    <property type="term" value="F:growth factor activity"/>
    <property type="evidence" value="ECO:0007669"/>
    <property type="project" value="InterPro"/>
</dbReference>
<dbReference type="GO" id="GO:0008017">
    <property type="term" value="F:microtubule binding"/>
    <property type="evidence" value="ECO:0000250"/>
    <property type="project" value="UniProtKB"/>
</dbReference>
<dbReference type="GO" id="GO:0017080">
    <property type="term" value="F:sodium channel regulator activity"/>
    <property type="evidence" value="ECO:0000250"/>
    <property type="project" value="UniProtKB"/>
</dbReference>
<dbReference type="GO" id="GO:0044325">
    <property type="term" value="F:transmembrane transporter binding"/>
    <property type="evidence" value="ECO:0000250"/>
    <property type="project" value="UniProtKB"/>
</dbReference>
<dbReference type="GO" id="GO:0048755">
    <property type="term" value="P:branching morphogenesis of a nerve"/>
    <property type="evidence" value="ECO:0000266"/>
    <property type="project" value="RGD"/>
</dbReference>
<dbReference type="GO" id="GO:0021795">
    <property type="term" value="P:cerebral cortex cell migration"/>
    <property type="evidence" value="ECO:0000250"/>
    <property type="project" value="UniProtKB"/>
</dbReference>
<dbReference type="GO" id="GO:0045200">
    <property type="term" value="P:establishment of neuroblast polarity"/>
    <property type="evidence" value="ECO:0000250"/>
    <property type="project" value="UniProtKB"/>
</dbReference>
<dbReference type="GO" id="GO:0021766">
    <property type="term" value="P:hippocampus development"/>
    <property type="evidence" value="ECO:0000250"/>
    <property type="project" value="UniProtKB"/>
</dbReference>
<dbReference type="GO" id="GO:1904862">
    <property type="term" value="P:inhibitory synapse assembly"/>
    <property type="evidence" value="ECO:0000250"/>
    <property type="project" value="UniProtKB"/>
</dbReference>
<dbReference type="GO" id="GO:0007612">
    <property type="term" value="P:learning"/>
    <property type="evidence" value="ECO:0000250"/>
    <property type="project" value="UniProtKB"/>
</dbReference>
<dbReference type="GO" id="GO:0007611">
    <property type="term" value="P:learning or memory"/>
    <property type="evidence" value="ECO:0000266"/>
    <property type="project" value="RGD"/>
</dbReference>
<dbReference type="GO" id="GO:0000165">
    <property type="term" value="P:MAPK cascade"/>
    <property type="evidence" value="ECO:0000266"/>
    <property type="project" value="RGD"/>
</dbReference>
<dbReference type="GO" id="GO:0007613">
    <property type="term" value="P:memory"/>
    <property type="evidence" value="ECO:0000250"/>
    <property type="project" value="UniProtKB"/>
</dbReference>
<dbReference type="GO" id="GO:0046785">
    <property type="term" value="P:microtubule polymerization"/>
    <property type="evidence" value="ECO:0000250"/>
    <property type="project" value="UniProtKB"/>
</dbReference>
<dbReference type="GO" id="GO:0048671">
    <property type="term" value="P:negative regulation of collateral sprouting"/>
    <property type="evidence" value="ECO:0000250"/>
    <property type="project" value="UniProtKB"/>
</dbReference>
<dbReference type="GO" id="GO:0007026">
    <property type="term" value="P:negative regulation of microtubule depolymerization"/>
    <property type="evidence" value="ECO:0000250"/>
    <property type="project" value="UniProtKB"/>
</dbReference>
<dbReference type="GO" id="GO:0022008">
    <property type="term" value="P:neurogenesis"/>
    <property type="evidence" value="ECO:0000266"/>
    <property type="project" value="RGD"/>
</dbReference>
<dbReference type="GO" id="GO:0001764">
    <property type="term" value="P:neuron migration"/>
    <property type="evidence" value="ECO:0000250"/>
    <property type="project" value="UniProtKB"/>
</dbReference>
<dbReference type="GO" id="GO:1905152">
    <property type="term" value="P:positive regulation of voltage-gated sodium channel activity"/>
    <property type="evidence" value="ECO:0000250"/>
    <property type="project" value="UniProtKB"/>
</dbReference>
<dbReference type="GO" id="GO:0072659">
    <property type="term" value="P:protein localization to plasma membrane"/>
    <property type="evidence" value="ECO:0000250"/>
    <property type="project" value="UniProtKB"/>
</dbReference>
<dbReference type="GO" id="GO:0098909">
    <property type="term" value="P:regulation of cardiac muscle cell action potential involved in regulation of contraction"/>
    <property type="evidence" value="ECO:0000266"/>
    <property type="project" value="RGD"/>
</dbReference>
<dbReference type="GO" id="GO:1990834">
    <property type="term" value="P:response to odorant"/>
    <property type="evidence" value="ECO:0000270"/>
    <property type="project" value="RGD"/>
</dbReference>
<dbReference type="GO" id="GO:0006814">
    <property type="term" value="P:sodium ion transport"/>
    <property type="evidence" value="ECO:0000266"/>
    <property type="project" value="RGD"/>
</dbReference>
<dbReference type="CDD" id="cd23329">
    <property type="entry name" value="beta-trefoil_FGF13"/>
    <property type="match status" value="1"/>
</dbReference>
<dbReference type="FunFam" id="2.80.10.50:FF:000001">
    <property type="entry name" value="Fibroblast growth factor"/>
    <property type="match status" value="1"/>
</dbReference>
<dbReference type="Gene3D" id="2.80.10.50">
    <property type="match status" value="1"/>
</dbReference>
<dbReference type="InterPro" id="IPR002209">
    <property type="entry name" value="Fibroblast_GF_fam"/>
</dbReference>
<dbReference type="InterPro" id="IPR008996">
    <property type="entry name" value="IL1/FGF"/>
</dbReference>
<dbReference type="PANTHER" id="PTHR11486">
    <property type="entry name" value="FIBROBLAST GROWTH FACTOR"/>
    <property type="match status" value="1"/>
</dbReference>
<dbReference type="Pfam" id="PF00167">
    <property type="entry name" value="FGF"/>
    <property type="match status" value="1"/>
</dbReference>
<dbReference type="PRINTS" id="PR00263">
    <property type="entry name" value="HBGFFGF"/>
</dbReference>
<dbReference type="PRINTS" id="PR00262">
    <property type="entry name" value="IL1HBGF"/>
</dbReference>
<dbReference type="SMART" id="SM00442">
    <property type="entry name" value="FGF"/>
    <property type="match status" value="1"/>
</dbReference>
<dbReference type="SUPFAM" id="SSF50353">
    <property type="entry name" value="Cytokine"/>
    <property type="match status" value="1"/>
</dbReference>
<dbReference type="PROSITE" id="PS00247">
    <property type="entry name" value="HBGF_FGF"/>
    <property type="match status" value="1"/>
</dbReference>
<organism>
    <name type="scientific">Rattus norvegicus</name>
    <name type="common">Rat</name>
    <dbReference type="NCBI Taxonomy" id="10116"/>
    <lineage>
        <taxon>Eukaryota</taxon>
        <taxon>Metazoa</taxon>
        <taxon>Chordata</taxon>
        <taxon>Craniata</taxon>
        <taxon>Vertebrata</taxon>
        <taxon>Euteleostomi</taxon>
        <taxon>Mammalia</taxon>
        <taxon>Eutheria</taxon>
        <taxon>Euarchontoglires</taxon>
        <taxon>Glires</taxon>
        <taxon>Rodentia</taxon>
        <taxon>Myomorpha</taxon>
        <taxon>Muroidea</taxon>
        <taxon>Muridae</taxon>
        <taxon>Murinae</taxon>
        <taxon>Rattus</taxon>
    </lineage>
</organism>